<protein>
    <recommendedName>
        <fullName evidence="9">G-type lectin S-receptor-like serine/threonine-protein kinase LECRK3</fullName>
        <shortName evidence="8">OsLecRK3</shortName>
        <ecNumber evidence="9">2.7.11.1</ecNumber>
    </recommendedName>
    <alternativeName>
        <fullName evidence="9">OsRLCK135</fullName>
    </alternativeName>
</protein>
<name>LERK3_ORYSI</name>
<keyword id="KW-0067">ATP-binding</keyword>
<keyword id="KW-1015">Disulfide bond</keyword>
<keyword id="KW-0245">EGF-like domain</keyword>
<keyword id="KW-0325">Glycoprotein</keyword>
<keyword id="KW-0418">Kinase</keyword>
<keyword id="KW-0430">Lectin</keyword>
<keyword id="KW-0472">Membrane</keyword>
<keyword id="KW-0547">Nucleotide-binding</keyword>
<keyword id="KW-0611">Plant defense</keyword>
<keyword id="KW-0675">Receptor</keyword>
<keyword id="KW-1185">Reference proteome</keyword>
<keyword id="KW-0723">Serine/threonine-protein kinase</keyword>
<keyword id="KW-0732">Signal</keyword>
<keyword id="KW-0808">Transferase</keyword>
<keyword id="KW-0812">Transmembrane</keyword>
<keyword id="KW-1133">Transmembrane helix</keyword>
<feature type="signal peptide" evidence="1">
    <location>
        <begin position="1"/>
        <end position="23"/>
    </location>
</feature>
<feature type="chain" id="PRO_0000436170" description="G-type lectin S-receptor-like serine/threonine-protein kinase LECRK3" evidence="1">
    <location>
        <begin position="24"/>
        <end position="811"/>
    </location>
</feature>
<feature type="topological domain" description="Extracellular" evidence="9">
    <location>
        <begin position="24"/>
        <end position="464"/>
    </location>
</feature>
<feature type="transmembrane region" description="Helical" evidence="1">
    <location>
        <begin position="465"/>
        <end position="485"/>
    </location>
</feature>
<feature type="topological domain" description="Cytoplasmic" evidence="9">
    <location>
        <begin position="486"/>
        <end position="811"/>
    </location>
</feature>
<feature type="domain" description="Bulb-type lectin" evidence="2">
    <location>
        <begin position="24"/>
        <end position="153"/>
    </location>
</feature>
<feature type="domain" description="EGF-like; atypical" evidence="9">
    <location>
        <begin position="292"/>
        <end position="344"/>
    </location>
</feature>
<feature type="domain" description="PAN" evidence="5">
    <location>
        <begin position="352"/>
        <end position="430"/>
    </location>
</feature>
<feature type="domain" description="Protein kinase" evidence="4">
    <location>
        <begin position="521"/>
        <end position="795"/>
    </location>
</feature>
<feature type="active site" description="Proton acceptor" evidence="4">
    <location>
        <position position="645"/>
    </location>
</feature>
<feature type="binding site" evidence="4">
    <location>
        <begin position="527"/>
        <end position="535"/>
    </location>
    <ligand>
        <name>ATP</name>
        <dbReference type="ChEBI" id="CHEBI:30616"/>
    </ligand>
</feature>
<feature type="binding site" evidence="4">
    <location>
        <position position="551"/>
    </location>
    <ligand>
        <name>ATP</name>
        <dbReference type="ChEBI" id="CHEBI:30616"/>
    </ligand>
</feature>
<feature type="glycosylation site" description="N-linked (GlcNAc...) asparagine" evidence="6">
    <location>
        <position position="26"/>
    </location>
</feature>
<feature type="glycosylation site" description="N-linked (GlcNAc...) asparagine" evidence="6">
    <location>
        <position position="39"/>
    </location>
</feature>
<feature type="glycosylation site" description="N-linked (GlcNAc...) asparagine" evidence="6">
    <location>
        <position position="59"/>
    </location>
</feature>
<feature type="glycosylation site" description="N-linked (GlcNAc...) asparagine" evidence="6">
    <location>
        <position position="219"/>
    </location>
</feature>
<feature type="glycosylation site" description="N-linked (GlcNAc...) asparagine" evidence="6">
    <location>
        <position position="226"/>
    </location>
</feature>
<feature type="glycosylation site" description="N-linked (GlcNAc...) asparagine" evidence="6">
    <location>
        <position position="237"/>
    </location>
</feature>
<feature type="glycosylation site" description="N-linked (GlcNAc...) asparagine" evidence="6">
    <location>
        <position position="242"/>
    </location>
</feature>
<feature type="glycosylation site" description="N-linked (GlcNAc...) asparagine" evidence="6">
    <location>
        <position position="321"/>
    </location>
</feature>
<feature type="disulfide bond" evidence="3">
    <location>
        <begin position="296"/>
        <end position="314"/>
    </location>
</feature>
<feature type="disulfide bond" evidence="3">
    <location>
        <begin position="308"/>
        <end position="325"/>
    </location>
</feature>
<feature type="disulfide bond" evidence="3">
    <location>
        <begin position="327"/>
        <end position="343"/>
    </location>
</feature>
<feature type="disulfide bond" evidence="5">
    <location>
        <begin position="389"/>
        <end position="411"/>
    </location>
</feature>
<feature type="disulfide bond" evidence="5">
    <location>
        <begin position="393"/>
        <end position="399"/>
    </location>
</feature>
<feature type="sequence conflict" description="In Ref. 2; CAH67716/CAH66271." ref="2">
    <original>D</original>
    <variation>E</variation>
    <location>
        <position position="74"/>
    </location>
</feature>
<feature type="sequence conflict" description="In Ref. 1; AIE56238/AIE56239/AIE56240/AIE56241/AIE56242/AIE56243/AIE56244." evidence="9" ref="1">
    <original>KDDTI</original>
    <variation>QGDTM</variation>
    <location>
        <begin position="88"/>
        <end position="92"/>
    </location>
</feature>
<feature type="sequence conflict" description="In Ref. 1; AIE56238/AIE56239/AIE56240/AIE56241/AIE56242/AIE56243/AIE56244." evidence="9" ref="1">
    <original>V</original>
    <variation>A</variation>
    <location>
        <position position="189"/>
    </location>
</feature>
<feature type="sequence conflict" description="In Ref. 2; CAH67716/CAH66271 and 1; AIE56238/AIE56239/AIE56240/AIE56241/AIE56242/AIE56243/AIE56244." ref="2 1">
    <original>K</original>
    <variation>N</variation>
    <location>
        <position position="503"/>
    </location>
</feature>
<feature type="sequence conflict" description="In Ref. 2; CAH67716/CAH66271 and 1; AIE56238/AIE56239/AIE56240/AIE56241/AIE56242/AIE56243/AIE56244." ref="2 1">
    <original>I</original>
    <variation>T</variation>
    <location>
        <position position="546"/>
    </location>
</feature>
<feature type="sequence conflict" description="In Ref. 2; CAH67716/CAH66271." ref="2">
    <original>A</original>
    <variation>S</variation>
    <location>
        <position position="627"/>
    </location>
</feature>
<feature type="sequence conflict" description="In Ref. 2; CAH67716/CAH66271 and 1; AIE56238/AIE56239/AIE56240/AIE56241/AIE56242/AIE56243/AIE56244." ref="2 1">
    <original>A</original>
    <variation>V</variation>
    <location>
        <position position="658"/>
    </location>
</feature>
<organism>
    <name type="scientific">Oryza sativa subsp. indica</name>
    <name type="common">Rice</name>
    <dbReference type="NCBI Taxonomy" id="39946"/>
    <lineage>
        <taxon>Eukaryota</taxon>
        <taxon>Viridiplantae</taxon>
        <taxon>Streptophyta</taxon>
        <taxon>Embryophyta</taxon>
        <taxon>Tracheophyta</taxon>
        <taxon>Spermatophyta</taxon>
        <taxon>Magnoliopsida</taxon>
        <taxon>Liliopsida</taxon>
        <taxon>Poales</taxon>
        <taxon>Poaceae</taxon>
        <taxon>BOP clade</taxon>
        <taxon>Oryzoideae</taxon>
        <taxon>Oryzeae</taxon>
        <taxon>Oryzinae</taxon>
        <taxon>Oryza</taxon>
        <taxon>Oryza sativa</taxon>
    </lineage>
</organism>
<dbReference type="EC" id="2.7.11.1" evidence="9"/>
<dbReference type="EMBL" id="KF748973">
    <property type="protein sequence ID" value="AIE56238.1"/>
    <property type="molecule type" value="Genomic_DNA"/>
</dbReference>
<dbReference type="EMBL" id="KF748974">
    <property type="protein sequence ID" value="AIE56239.1"/>
    <property type="molecule type" value="Genomic_DNA"/>
</dbReference>
<dbReference type="EMBL" id="KF748975">
    <property type="protein sequence ID" value="AIE56240.1"/>
    <property type="molecule type" value="Genomic_DNA"/>
</dbReference>
<dbReference type="EMBL" id="KF748976">
    <property type="protein sequence ID" value="AIE56241.1"/>
    <property type="molecule type" value="Genomic_DNA"/>
</dbReference>
<dbReference type="EMBL" id="KF748977">
    <property type="protein sequence ID" value="AIE56242.1"/>
    <property type="molecule type" value="Genomic_DNA"/>
</dbReference>
<dbReference type="EMBL" id="KF748978">
    <property type="protein sequence ID" value="AIE56243.1"/>
    <property type="molecule type" value="Genomic_DNA"/>
</dbReference>
<dbReference type="EMBL" id="KF748979">
    <property type="protein sequence ID" value="AIE56244.1"/>
    <property type="molecule type" value="Genomic_DNA"/>
</dbReference>
<dbReference type="EMBL" id="AL442110">
    <property type="protein sequence ID" value="CAH67716.1"/>
    <property type="molecule type" value="Genomic_DNA"/>
</dbReference>
<dbReference type="EMBL" id="CR855078">
    <property type="protein sequence ID" value="CAH66271.1"/>
    <property type="molecule type" value="Genomic_DNA"/>
</dbReference>
<dbReference type="EMBL" id="CM000129">
    <property type="protein sequence ID" value="EAY93045.1"/>
    <property type="status" value="ALT_SEQ"/>
    <property type="molecule type" value="Genomic_DNA"/>
</dbReference>
<dbReference type="SMR" id="Q25AG3"/>
<dbReference type="STRING" id="39946.Q25AG3"/>
<dbReference type="GlyCosmos" id="Q25AG3">
    <property type="glycosylation" value="8 sites, No reported glycans"/>
</dbReference>
<dbReference type="EnsemblPlants" id="OsZS97_04G004240_01">
    <property type="protein sequence ID" value="OsZS97_04G004240_01"/>
    <property type="gene ID" value="OsZS97_04G004240"/>
</dbReference>
<dbReference type="Gramene" id="OsZS97_04G004240_01">
    <property type="protein sequence ID" value="OsZS97_04G004240_01"/>
    <property type="gene ID" value="OsZS97_04G004240"/>
</dbReference>
<dbReference type="Proteomes" id="UP000007015">
    <property type="component" value="Chromosome 4"/>
</dbReference>
<dbReference type="GO" id="GO:0016020">
    <property type="term" value="C:membrane"/>
    <property type="evidence" value="ECO:0007669"/>
    <property type="project" value="UniProtKB-SubCell"/>
</dbReference>
<dbReference type="GO" id="GO:0005524">
    <property type="term" value="F:ATP binding"/>
    <property type="evidence" value="ECO:0007669"/>
    <property type="project" value="UniProtKB-KW"/>
</dbReference>
<dbReference type="GO" id="GO:0030246">
    <property type="term" value="F:carbohydrate binding"/>
    <property type="evidence" value="ECO:0007669"/>
    <property type="project" value="UniProtKB-KW"/>
</dbReference>
<dbReference type="GO" id="GO:0106310">
    <property type="term" value="F:protein serine kinase activity"/>
    <property type="evidence" value="ECO:0007669"/>
    <property type="project" value="RHEA"/>
</dbReference>
<dbReference type="GO" id="GO:0004674">
    <property type="term" value="F:protein serine/threonine kinase activity"/>
    <property type="evidence" value="ECO:0007669"/>
    <property type="project" value="UniProtKB-KW"/>
</dbReference>
<dbReference type="GO" id="GO:0006952">
    <property type="term" value="P:defense response"/>
    <property type="evidence" value="ECO:0007669"/>
    <property type="project" value="UniProtKB-KW"/>
</dbReference>
<dbReference type="GO" id="GO:0051707">
    <property type="term" value="P:response to other organism"/>
    <property type="evidence" value="ECO:0007669"/>
    <property type="project" value="UniProtKB-ARBA"/>
</dbReference>
<dbReference type="CDD" id="cd01098">
    <property type="entry name" value="PAN_AP_plant"/>
    <property type="match status" value="1"/>
</dbReference>
<dbReference type="FunFam" id="1.10.510.10:FF:000237">
    <property type="entry name" value="G-type lectin S-receptor-like serine/threonine-protein kinase"/>
    <property type="match status" value="1"/>
</dbReference>
<dbReference type="FunFam" id="3.30.200.20:FF:000059">
    <property type="entry name" value="S-receptor-like serine/threonine-protein kinase"/>
    <property type="match status" value="1"/>
</dbReference>
<dbReference type="FunFam" id="2.90.10.10:FF:000006">
    <property type="entry name" value="Serine/threonine-protein kinase"/>
    <property type="match status" value="1"/>
</dbReference>
<dbReference type="FunFam" id="2.90.10.30:FF:000001">
    <property type="entry name" value="Serine/threonine-protein kinase"/>
    <property type="match status" value="1"/>
</dbReference>
<dbReference type="Gene3D" id="2.90.10.30">
    <property type="match status" value="1"/>
</dbReference>
<dbReference type="Gene3D" id="2.90.10.10">
    <property type="entry name" value="Bulb-type lectin domain"/>
    <property type="match status" value="1"/>
</dbReference>
<dbReference type="Gene3D" id="3.30.200.20">
    <property type="entry name" value="Phosphorylase Kinase, domain 1"/>
    <property type="match status" value="1"/>
</dbReference>
<dbReference type="Gene3D" id="1.10.510.10">
    <property type="entry name" value="Transferase(Phosphotransferase) domain 1"/>
    <property type="match status" value="1"/>
</dbReference>
<dbReference type="InterPro" id="IPR001480">
    <property type="entry name" value="Bulb-type_lectin_dom"/>
</dbReference>
<dbReference type="InterPro" id="IPR036426">
    <property type="entry name" value="Bulb-type_lectin_dom_sf"/>
</dbReference>
<dbReference type="InterPro" id="IPR051343">
    <property type="entry name" value="G-type_lectin_kinases/EP1-like"/>
</dbReference>
<dbReference type="InterPro" id="IPR011009">
    <property type="entry name" value="Kinase-like_dom_sf"/>
</dbReference>
<dbReference type="InterPro" id="IPR000719">
    <property type="entry name" value="Prot_kinase_dom"/>
</dbReference>
<dbReference type="InterPro" id="IPR017441">
    <property type="entry name" value="Protein_kinase_ATP_BS"/>
</dbReference>
<dbReference type="InterPro" id="IPR008271">
    <property type="entry name" value="Ser/Thr_kinase_AS"/>
</dbReference>
<dbReference type="InterPro" id="IPR024171">
    <property type="entry name" value="SRK-like_kinase"/>
</dbReference>
<dbReference type="PANTHER" id="PTHR47976">
    <property type="entry name" value="G-TYPE LECTIN S-RECEPTOR-LIKE SERINE/THREONINE-PROTEIN KINASE SD2-5"/>
    <property type="match status" value="1"/>
</dbReference>
<dbReference type="PANTHER" id="PTHR47976:SF89">
    <property type="entry name" value="G-TYPE LECTIN S-RECEPTOR-LIKE SERINE_THREONINE-PROTEIN KINASE LECRK3"/>
    <property type="match status" value="1"/>
</dbReference>
<dbReference type="Pfam" id="PF00069">
    <property type="entry name" value="Pkinase"/>
    <property type="match status" value="1"/>
</dbReference>
<dbReference type="PIRSF" id="PIRSF000641">
    <property type="entry name" value="SRK"/>
    <property type="match status" value="1"/>
</dbReference>
<dbReference type="SMART" id="SM00108">
    <property type="entry name" value="B_lectin"/>
    <property type="match status" value="1"/>
</dbReference>
<dbReference type="SMART" id="SM00220">
    <property type="entry name" value="S_TKc"/>
    <property type="match status" value="1"/>
</dbReference>
<dbReference type="SUPFAM" id="SSF51110">
    <property type="entry name" value="alpha-D-mannose-specific plant lectins"/>
    <property type="match status" value="1"/>
</dbReference>
<dbReference type="SUPFAM" id="SSF56112">
    <property type="entry name" value="Protein kinase-like (PK-like)"/>
    <property type="match status" value="1"/>
</dbReference>
<dbReference type="PROSITE" id="PS50927">
    <property type="entry name" value="BULB_LECTIN"/>
    <property type="match status" value="1"/>
</dbReference>
<dbReference type="PROSITE" id="PS00107">
    <property type="entry name" value="PROTEIN_KINASE_ATP"/>
    <property type="match status" value="1"/>
</dbReference>
<dbReference type="PROSITE" id="PS50011">
    <property type="entry name" value="PROTEIN_KINASE_DOM"/>
    <property type="match status" value="1"/>
</dbReference>
<dbReference type="PROSITE" id="PS00108">
    <property type="entry name" value="PROTEIN_KINASE_ST"/>
    <property type="match status" value="1"/>
</dbReference>
<comment type="function">
    <text evidence="7">Involved in resistance against the herbivorous insect brown planthopper (N.lugens, BPH). Member of the BPH3 (BPH resistance locus 3) cluster which contains LECRK1, LECRK2 and LECRK3.</text>
</comment>
<comment type="catalytic activity">
    <reaction evidence="9">
        <text>L-seryl-[protein] + ATP = O-phospho-L-seryl-[protein] + ADP + H(+)</text>
        <dbReference type="Rhea" id="RHEA:17989"/>
        <dbReference type="Rhea" id="RHEA-COMP:9863"/>
        <dbReference type="Rhea" id="RHEA-COMP:11604"/>
        <dbReference type="ChEBI" id="CHEBI:15378"/>
        <dbReference type="ChEBI" id="CHEBI:29999"/>
        <dbReference type="ChEBI" id="CHEBI:30616"/>
        <dbReference type="ChEBI" id="CHEBI:83421"/>
        <dbReference type="ChEBI" id="CHEBI:456216"/>
        <dbReference type="EC" id="2.7.11.1"/>
    </reaction>
</comment>
<comment type="catalytic activity">
    <reaction evidence="9">
        <text>L-threonyl-[protein] + ATP = O-phospho-L-threonyl-[protein] + ADP + H(+)</text>
        <dbReference type="Rhea" id="RHEA:46608"/>
        <dbReference type="Rhea" id="RHEA-COMP:11060"/>
        <dbReference type="Rhea" id="RHEA-COMP:11605"/>
        <dbReference type="ChEBI" id="CHEBI:15378"/>
        <dbReference type="ChEBI" id="CHEBI:30013"/>
        <dbReference type="ChEBI" id="CHEBI:30616"/>
        <dbReference type="ChEBI" id="CHEBI:61977"/>
        <dbReference type="ChEBI" id="CHEBI:456216"/>
        <dbReference type="EC" id="2.7.11.1"/>
    </reaction>
</comment>
<comment type="subcellular location">
    <subcellularLocation>
        <location evidence="1">Membrane</location>
        <topology evidence="1">Single-pass type I membrane protein</topology>
    </subcellularLocation>
</comment>
<comment type="similarity">
    <text evidence="4">Belongs to the protein kinase superfamily. Ser/Thr protein kinase family.</text>
</comment>
<comment type="sequence caution" evidence="9">
    <conflict type="erroneous gene model prediction">
        <sequence resource="EMBL-CDS" id="EAY93045"/>
    </conflict>
</comment>
<proteinExistence type="inferred from homology"/>
<sequence>MAHLLFLPILQLLLLYCTKSAQAQLNISIGSSLTPQGVNNSWISPSADFAFGFRAVDGNSSSYLLAVWFNKIADKTVVWYARTSSNGKDDTIPVQVQSGSVLKLADGALSLRDPSGNEVWNPQVTDVGYARMLDTGNFRLLGTDGATKWESFGDPSDTILPTQVLSLGTALHSRLLATDYSNGRFQLKVQRDGNLVMYPDAVPSGYLYDPYWASNTVDNGSQLVFNETGRIYFTIINGSQVNITSAGVDSMGDFFHRATLDTDGVFRQYVYPKNIHARPLWPEQWTAVDVLPENICQSIQTMVGSGACGFNSYCTIDGTKNTTSCLCPQNYKFIDDKRKYKGCRPDFEPQNCDLDETTAMLQYDMAPIDRVDWPLSDYEQYNPIDQTECRRLCVIDCFCAVAVFDKASSTCWKKRFPLSNGKMDVNVPRTVLIKVPRSTNSPSVFSSGSSKWKEDKKYWILGSSLLFGSSVLVNFLLISVMLFGTYCSITSRKKIQLSQPSNKSGLPPKIFTYSELEKATGGFQEVLGTGASGVVYKGQLQDEFGINIAVKKIEKLQQEAQKEFLVEVQTIGQTFHRNLVRLLGFCNEGTERLLVYEFMSNGSLNTFLFSDTHPHWSLRVQVALGVARGLLYLHEECNKQIIHCDMKPQNILLDDNFAAKISDFGLAKLLPVNQTQTNTGIRGTRGYVAPEWFKNIGITSKVDVYSFGVILLELVCCRKNVELEVLDEEQTILTYWANDCYKCGRIDLLVAGDDEAIFNIKKVERFVAVALWCLQEEPSMRPTMLKVTQMLDGAVQIPTPPDPSSYISSLA</sequence>
<evidence type="ECO:0000255" key="1"/>
<evidence type="ECO:0000255" key="2">
    <source>
        <dbReference type="PROSITE-ProRule" id="PRU00038"/>
    </source>
</evidence>
<evidence type="ECO:0000255" key="3">
    <source>
        <dbReference type="PROSITE-ProRule" id="PRU00076"/>
    </source>
</evidence>
<evidence type="ECO:0000255" key="4">
    <source>
        <dbReference type="PROSITE-ProRule" id="PRU00159"/>
    </source>
</evidence>
<evidence type="ECO:0000255" key="5">
    <source>
        <dbReference type="PROSITE-ProRule" id="PRU00315"/>
    </source>
</evidence>
<evidence type="ECO:0000255" key="6">
    <source>
        <dbReference type="PROSITE-ProRule" id="PRU00498"/>
    </source>
</evidence>
<evidence type="ECO:0000269" key="7">
    <source>
    </source>
</evidence>
<evidence type="ECO:0000303" key="8">
    <source>
    </source>
</evidence>
<evidence type="ECO:0000305" key="9"/>
<evidence type="ECO:0000312" key="10">
    <source>
        <dbReference type="EMBL" id="CAH66271.1"/>
    </source>
</evidence>
<evidence type="ECO:0000312" key="11">
    <source>
        <dbReference type="EMBL" id="CAH67716.1"/>
    </source>
</evidence>
<evidence type="ECO:0000312" key="12">
    <source>
        <dbReference type="EMBL" id="EAY93045.1"/>
    </source>
</evidence>
<gene>
    <name evidence="8" type="primary">LECRK3</name>
    <name evidence="11" type="ORF">H0512B01.11</name>
    <name evidence="12" type="ORF">OsI_14844</name>
    <name evidence="10" type="ORF">OSIGBa0147O06.1</name>
</gene>
<accession>Q25AG3</accession>
<accession>A0A075F7G5</accession>
<accession>A2XQD5</accession>
<reference key="1">
    <citation type="journal article" date="2015" name="Nat. Biotechnol.">
        <title>A gene cluster encoding lectin receptor kinases confers broad-spectrum and durable insect resistance in rice.</title>
        <authorList>
            <person name="Liu Y."/>
            <person name="Wu H."/>
            <person name="Chen H."/>
            <person name="Liu Y."/>
            <person name="He J."/>
            <person name="Kang H."/>
            <person name="Sun Z."/>
            <person name="Pan G."/>
            <person name="Wang Q."/>
            <person name="Hu J."/>
            <person name="Zhou F."/>
            <person name="Zhou K."/>
            <person name="Zheng X."/>
            <person name="Ren Y."/>
            <person name="Chen L."/>
            <person name="Wang Y."/>
            <person name="Zhao Z."/>
            <person name="Lin Q."/>
            <person name="Wu F."/>
            <person name="Zhang X."/>
            <person name="Guo X."/>
            <person name="Cheng X."/>
            <person name="Jiang L."/>
            <person name="Wu C."/>
            <person name="Wang H."/>
            <person name="Wan J."/>
        </authorList>
    </citation>
    <scope>NUCLEOTIDE SEQUENCE [GENOMIC DNA]</scope>
    <scope>FUNCTION</scope>
</reference>
<reference key="2">
    <citation type="journal article" date="2002" name="Nature">
        <title>Sequence and analysis of rice chromosome 4.</title>
        <authorList>
            <person name="Feng Q."/>
            <person name="Zhang Y."/>
            <person name="Hao P."/>
            <person name="Wang S."/>
            <person name="Fu G."/>
            <person name="Huang Y."/>
            <person name="Li Y."/>
            <person name="Zhu J."/>
            <person name="Liu Y."/>
            <person name="Hu X."/>
            <person name="Jia P."/>
            <person name="Zhang Y."/>
            <person name="Zhao Q."/>
            <person name="Ying K."/>
            <person name="Yu S."/>
            <person name="Tang Y."/>
            <person name="Weng Q."/>
            <person name="Zhang L."/>
            <person name="Lu Y."/>
            <person name="Mu J."/>
            <person name="Lu Y."/>
            <person name="Zhang L.S."/>
            <person name="Yu Z."/>
            <person name="Fan D."/>
            <person name="Liu X."/>
            <person name="Lu T."/>
            <person name="Li C."/>
            <person name="Wu Y."/>
            <person name="Sun T."/>
            <person name="Lei H."/>
            <person name="Li T."/>
            <person name="Hu H."/>
            <person name="Guan J."/>
            <person name="Wu M."/>
            <person name="Zhang R."/>
            <person name="Zhou B."/>
            <person name="Chen Z."/>
            <person name="Chen L."/>
            <person name="Jin Z."/>
            <person name="Wang R."/>
            <person name="Yin H."/>
            <person name="Cai Z."/>
            <person name="Ren S."/>
            <person name="Lv G."/>
            <person name="Gu W."/>
            <person name="Zhu G."/>
            <person name="Tu Y."/>
            <person name="Jia J."/>
            <person name="Zhang Y."/>
            <person name="Chen J."/>
            <person name="Kang H."/>
            <person name="Chen X."/>
            <person name="Shao C."/>
            <person name="Sun Y."/>
            <person name="Hu Q."/>
            <person name="Zhang X."/>
            <person name="Zhang W."/>
            <person name="Wang L."/>
            <person name="Ding C."/>
            <person name="Sheng H."/>
            <person name="Gu J."/>
            <person name="Chen S."/>
            <person name="Ni L."/>
            <person name="Zhu F."/>
            <person name="Chen W."/>
            <person name="Lan L."/>
            <person name="Lai Y."/>
            <person name="Cheng Z."/>
            <person name="Gu M."/>
            <person name="Jiang J."/>
            <person name="Li J."/>
            <person name="Hong G."/>
            <person name="Xue Y."/>
            <person name="Han B."/>
        </authorList>
    </citation>
    <scope>NUCLEOTIDE SEQUENCE [LARGE SCALE GENOMIC DNA]</scope>
    <source>
        <strain>cv. Guang-Lu-Ai No.4</strain>
    </source>
</reference>
<reference key="3">
    <citation type="journal article" date="2005" name="PLoS Biol.">
        <title>The genomes of Oryza sativa: a history of duplications.</title>
        <authorList>
            <person name="Yu J."/>
            <person name="Wang J."/>
            <person name="Lin W."/>
            <person name="Li S."/>
            <person name="Li H."/>
            <person name="Zhou J."/>
            <person name="Ni P."/>
            <person name="Dong W."/>
            <person name="Hu S."/>
            <person name="Zeng C."/>
            <person name="Zhang J."/>
            <person name="Zhang Y."/>
            <person name="Li R."/>
            <person name="Xu Z."/>
            <person name="Li S."/>
            <person name="Li X."/>
            <person name="Zheng H."/>
            <person name="Cong L."/>
            <person name="Lin L."/>
            <person name="Yin J."/>
            <person name="Geng J."/>
            <person name="Li G."/>
            <person name="Shi J."/>
            <person name="Liu J."/>
            <person name="Lv H."/>
            <person name="Li J."/>
            <person name="Wang J."/>
            <person name="Deng Y."/>
            <person name="Ran L."/>
            <person name="Shi X."/>
            <person name="Wang X."/>
            <person name="Wu Q."/>
            <person name="Li C."/>
            <person name="Ren X."/>
            <person name="Wang J."/>
            <person name="Wang X."/>
            <person name="Li D."/>
            <person name="Liu D."/>
            <person name="Zhang X."/>
            <person name="Ji Z."/>
            <person name="Zhao W."/>
            <person name="Sun Y."/>
            <person name="Zhang Z."/>
            <person name="Bao J."/>
            <person name="Han Y."/>
            <person name="Dong L."/>
            <person name="Ji J."/>
            <person name="Chen P."/>
            <person name="Wu S."/>
            <person name="Liu J."/>
            <person name="Xiao Y."/>
            <person name="Bu D."/>
            <person name="Tan J."/>
            <person name="Yang L."/>
            <person name="Ye C."/>
            <person name="Zhang J."/>
            <person name="Xu J."/>
            <person name="Zhou Y."/>
            <person name="Yu Y."/>
            <person name="Zhang B."/>
            <person name="Zhuang S."/>
            <person name="Wei H."/>
            <person name="Liu B."/>
            <person name="Lei M."/>
            <person name="Yu H."/>
            <person name="Li Y."/>
            <person name="Xu H."/>
            <person name="Wei S."/>
            <person name="He X."/>
            <person name="Fang L."/>
            <person name="Zhang Z."/>
            <person name="Zhang Y."/>
            <person name="Huang X."/>
            <person name="Su Z."/>
            <person name="Tong W."/>
            <person name="Li J."/>
            <person name="Tong Z."/>
            <person name="Li S."/>
            <person name="Ye J."/>
            <person name="Wang L."/>
            <person name="Fang L."/>
            <person name="Lei T."/>
            <person name="Chen C.-S."/>
            <person name="Chen H.-C."/>
            <person name="Xu Z."/>
            <person name="Li H."/>
            <person name="Huang H."/>
            <person name="Zhang F."/>
            <person name="Xu H."/>
            <person name="Li N."/>
            <person name="Zhao C."/>
            <person name="Li S."/>
            <person name="Dong L."/>
            <person name="Huang Y."/>
            <person name="Li L."/>
            <person name="Xi Y."/>
            <person name="Qi Q."/>
            <person name="Li W."/>
            <person name="Zhang B."/>
            <person name="Hu W."/>
            <person name="Zhang Y."/>
            <person name="Tian X."/>
            <person name="Jiao Y."/>
            <person name="Liang X."/>
            <person name="Jin J."/>
            <person name="Gao L."/>
            <person name="Zheng W."/>
            <person name="Hao B."/>
            <person name="Liu S.-M."/>
            <person name="Wang W."/>
            <person name="Yuan L."/>
            <person name="Cao M."/>
            <person name="McDermott J."/>
            <person name="Samudrala R."/>
            <person name="Wang J."/>
            <person name="Wong G.K.-S."/>
            <person name="Yang H."/>
        </authorList>
    </citation>
    <scope>NUCLEOTIDE SEQUENCE [LARGE SCALE GENOMIC DNA]</scope>
    <source>
        <strain>cv. 93-11</strain>
    </source>
</reference>